<dbReference type="EC" id="2.5.1.19" evidence="1"/>
<dbReference type="EMBL" id="AP006716">
    <property type="protein sequence ID" value="BAE04757.1"/>
    <property type="molecule type" value="Genomic_DNA"/>
</dbReference>
<dbReference type="RefSeq" id="WP_011275743.1">
    <property type="nucleotide sequence ID" value="NC_007168.1"/>
</dbReference>
<dbReference type="SMR" id="Q4L6G8"/>
<dbReference type="GeneID" id="93780842"/>
<dbReference type="KEGG" id="sha:SH1448"/>
<dbReference type="eggNOG" id="COG0128">
    <property type="taxonomic scope" value="Bacteria"/>
</dbReference>
<dbReference type="HOGENOM" id="CLU_024321_0_1_9"/>
<dbReference type="OrthoDB" id="9809920at2"/>
<dbReference type="UniPathway" id="UPA00053">
    <property type="reaction ID" value="UER00089"/>
</dbReference>
<dbReference type="Proteomes" id="UP000000543">
    <property type="component" value="Chromosome"/>
</dbReference>
<dbReference type="GO" id="GO:0005737">
    <property type="term" value="C:cytoplasm"/>
    <property type="evidence" value="ECO:0007669"/>
    <property type="project" value="UniProtKB-SubCell"/>
</dbReference>
<dbReference type="GO" id="GO:0003866">
    <property type="term" value="F:3-phosphoshikimate 1-carboxyvinyltransferase activity"/>
    <property type="evidence" value="ECO:0007669"/>
    <property type="project" value="UniProtKB-UniRule"/>
</dbReference>
<dbReference type="GO" id="GO:0008652">
    <property type="term" value="P:amino acid biosynthetic process"/>
    <property type="evidence" value="ECO:0007669"/>
    <property type="project" value="UniProtKB-KW"/>
</dbReference>
<dbReference type="GO" id="GO:0009073">
    <property type="term" value="P:aromatic amino acid family biosynthetic process"/>
    <property type="evidence" value="ECO:0007669"/>
    <property type="project" value="UniProtKB-KW"/>
</dbReference>
<dbReference type="GO" id="GO:0009423">
    <property type="term" value="P:chorismate biosynthetic process"/>
    <property type="evidence" value="ECO:0007669"/>
    <property type="project" value="UniProtKB-UniRule"/>
</dbReference>
<dbReference type="CDD" id="cd01556">
    <property type="entry name" value="EPSP_synthase"/>
    <property type="match status" value="1"/>
</dbReference>
<dbReference type="FunFam" id="3.65.10.10:FF:000005">
    <property type="entry name" value="3-phosphoshikimate 1-carboxyvinyltransferase"/>
    <property type="match status" value="1"/>
</dbReference>
<dbReference type="FunFam" id="3.65.10.10:FF:000006">
    <property type="entry name" value="3-phosphoshikimate 1-carboxyvinyltransferase"/>
    <property type="match status" value="1"/>
</dbReference>
<dbReference type="Gene3D" id="3.65.10.10">
    <property type="entry name" value="Enolpyruvate transferase domain"/>
    <property type="match status" value="2"/>
</dbReference>
<dbReference type="HAMAP" id="MF_00210">
    <property type="entry name" value="EPSP_synth"/>
    <property type="match status" value="1"/>
</dbReference>
<dbReference type="InterPro" id="IPR001986">
    <property type="entry name" value="Enolpyruvate_Tfrase_dom"/>
</dbReference>
<dbReference type="InterPro" id="IPR036968">
    <property type="entry name" value="Enolpyruvate_Tfrase_sf"/>
</dbReference>
<dbReference type="InterPro" id="IPR006264">
    <property type="entry name" value="EPSP_synthase"/>
</dbReference>
<dbReference type="InterPro" id="IPR023193">
    <property type="entry name" value="EPSP_synthase_CS"/>
</dbReference>
<dbReference type="InterPro" id="IPR013792">
    <property type="entry name" value="RNA3'P_cycl/enolpyr_Trfase_a/b"/>
</dbReference>
<dbReference type="NCBIfam" id="TIGR01356">
    <property type="entry name" value="aroA"/>
    <property type="match status" value="1"/>
</dbReference>
<dbReference type="PANTHER" id="PTHR21090">
    <property type="entry name" value="AROM/DEHYDROQUINATE SYNTHASE"/>
    <property type="match status" value="1"/>
</dbReference>
<dbReference type="PANTHER" id="PTHR21090:SF5">
    <property type="entry name" value="PENTAFUNCTIONAL AROM POLYPEPTIDE"/>
    <property type="match status" value="1"/>
</dbReference>
<dbReference type="Pfam" id="PF00275">
    <property type="entry name" value="EPSP_synthase"/>
    <property type="match status" value="1"/>
</dbReference>
<dbReference type="PIRSF" id="PIRSF000505">
    <property type="entry name" value="EPSPS"/>
    <property type="match status" value="1"/>
</dbReference>
<dbReference type="SUPFAM" id="SSF55205">
    <property type="entry name" value="EPT/RTPC-like"/>
    <property type="match status" value="1"/>
</dbReference>
<dbReference type="PROSITE" id="PS00104">
    <property type="entry name" value="EPSP_SYNTHASE_1"/>
    <property type="match status" value="1"/>
</dbReference>
<dbReference type="PROSITE" id="PS00885">
    <property type="entry name" value="EPSP_SYNTHASE_2"/>
    <property type="match status" value="1"/>
</dbReference>
<gene>
    <name evidence="1" type="primary">aroA</name>
    <name type="ordered locus">SH1448</name>
</gene>
<protein>
    <recommendedName>
        <fullName evidence="1">3-phosphoshikimate 1-carboxyvinyltransferase</fullName>
        <ecNumber evidence="1">2.5.1.19</ecNumber>
    </recommendedName>
    <alternativeName>
        <fullName evidence="1">5-enolpyruvylshikimate-3-phosphate synthase</fullName>
        <shortName evidence="1">EPSP synthase</shortName>
        <shortName evidence="1">EPSPS</shortName>
    </alternativeName>
</protein>
<sequence length="432" mass="46879">MSNEQMIDIKGPLIGEIEVPGDKSMTHRAIMLASLATGQSTIYKPLLGEDCLRTIEIFKLLGVNIELAEEKIIVDSPGYNKFKTPHQTLYTGNSGTTTRLLAGLLSGLNLNCVLSGDASIGKRPMDRVMKPLRLMGANITGIDDNFTPLIIKPASINGITYKMEVASAQVKSALLFASLFSNDSSKITELDVSRNHTETMFEQFNIPISISGKEITTQPNAIEHIKAKDFYVPGDISSAAFFIVAALITPGSDITIHNVGINPTRSGIIDIVKQMEGNIECLNITDTSEPTASIRVKYTPNLKPVLIEGDIVPKAIDELPIIALLCTQASGTSIIKDAEELKVKETNRIDTTADMLGLLGFELQPTDDGLIIHPSEFKKSATVDSLTDHRIGMMLAIASLLSDKPLNIRQFDAVNVSFPGFLPKLMLLENEG</sequence>
<reference key="1">
    <citation type="journal article" date="2005" name="J. Bacteriol.">
        <title>Whole-genome sequencing of Staphylococcus haemolyticus uncovers the extreme plasticity of its genome and the evolution of human-colonizing staphylococcal species.</title>
        <authorList>
            <person name="Takeuchi F."/>
            <person name="Watanabe S."/>
            <person name="Baba T."/>
            <person name="Yuzawa H."/>
            <person name="Ito T."/>
            <person name="Morimoto Y."/>
            <person name="Kuroda M."/>
            <person name="Cui L."/>
            <person name="Takahashi M."/>
            <person name="Ankai A."/>
            <person name="Baba S."/>
            <person name="Fukui S."/>
            <person name="Lee J.C."/>
            <person name="Hiramatsu K."/>
        </authorList>
    </citation>
    <scope>NUCLEOTIDE SEQUENCE [LARGE SCALE GENOMIC DNA]</scope>
    <source>
        <strain>JCSC1435</strain>
    </source>
</reference>
<proteinExistence type="inferred from homology"/>
<comment type="function">
    <text evidence="1">Catalyzes the transfer of the enolpyruvyl moiety of phosphoenolpyruvate (PEP) to the 5-hydroxyl of shikimate-3-phosphate (S3P) to produce enolpyruvyl shikimate-3-phosphate and inorganic phosphate.</text>
</comment>
<comment type="catalytic activity">
    <reaction evidence="1">
        <text>3-phosphoshikimate + phosphoenolpyruvate = 5-O-(1-carboxyvinyl)-3-phosphoshikimate + phosphate</text>
        <dbReference type="Rhea" id="RHEA:21256"/>
        <dbReference type="ChEBI" id="CHEBI:43474"/>
        <dbReference type="ChEBI" id="CHEBI:57701"/>
        <dbReference type="ChEBI" id="CHEBI:58702"/>
        <dbReference type="ChEBI" id="CHEBI:145989"/>
        <dbReference type="EC" id="2.5.1.19"/>
    </reaction>
    <physiologicalReaction direction="left-to-right" evidence="1">
        <dbReference type="Rhea" id="RHEA:21257"/>
    </physiologicalReaction>
</comment>
<comment type="pathway">
    <text evidence="1">Metabolic intermediate biosynthesis; chorismate biosynthesis; chorismate from D-erythrose 4-phosphate and phosphoenolpyruvate: step 6/7.</text>
</comment>
<comment type="subunit">
    <text evidence="1">Monomer.</text>
</comment>
<comment type="subcellular location">
    <subcellularLocation>
        <location evidence="1">Cytoplasm</location>
    </subcellularLocation>
</comment>
<comment type="similarity">
    <text evidence="1">Belongs to the EPSP synthase family.</text>
</comment>
<organism>
    <name type="scientific">Staphylococcus haemolyticus (strain JCSC1435)</name>
    <dbReference type="NCBI Taxonomy" id="279808"/>
    <lineage>
        <taxon>Bacteria</taxon>
        <taxon>Bacillati</taxon>
        <taxon>Bacillota</taxon>
        <taxon>Bacilli</taxon>
        <taxon>Bacillales</taxon>
        <taxon>Staphylococcaceae</taxon>
        <taxon>Staphylococcus</taxon>
    </lineage>
</organism>
<evidence type="ECO:0000255" key="1">
    <source>
        <dbReference type="HAMAP-Rule" id="MF_00210"/>
    </source>
</evidence>
<keyword id="KW-0028">Amino-acid biosynthesis</keyword>
<keyword id="KW-0057">Aromatic amino acid biosynthesis</keyword>
<keyword id="KW-0963">Cytoplasm</keyword>
<keyword id="KW-0808">Transferase</keyword>
<name>AROA_STAHJ</name>
<feature type="chain" id="PRO_1000012487" description="3-phosphoshikimate 1-carboxyvinyltransferase">
    <location>
        <begin position="1"/>
        <end position="432"/>
    </location>
</feature>
<feature type="active site" description="Proton acceptor" evidence="1">
    <location>
        <position position="317"/>
    </location>
</feature>
<feature type="binding site" evidence="1">
    <location>
        <position position="23"/>
    </location>
    <ligand>
        <name>3-phosphoshikimate</name>
        <dbReference type="ChEBI" id="CHEBI:145989"/>
    </ligand>
</feature>
<feature type="binding site" evidence="1">
    <location>
        <position position="23"/>
    </location>
    <ligand>
        <name>phosphoenolpyruvate</name>
        <dbReference type="ChEBI" id="CHEBI:58702"/>
    </ligand>
</feature>
<feature type="binding site" evidence="1">
    <location>
        <position position="24"/>
    </location>
    <ligand>
        <name>3-phosphoshikimate</name>
        <dbReference type="ChEBI" id="CHEBI:145989"/>
    </ligand>
</feature>
<feature type="binding site" evidence="1">
    <location>
        <position position="28"/>
    </location>
    <ligand>
        <name>3-phosphoshikimate</name>
        <dbReference type="ChEBI" id="CHEBI:145989"/>
    </ligand>
</feature>
<feature type="binding site" evidence="1">
    <location>
        <position position="95"/>
    </location>
    <ligand>
        <name>phosphoenolpyruvate</name>
        <dbReference type="ChEBI" id="CHEBI:58702"/>
    </ligand>
</feature>
<feature type="binding site" evidence="1">
    <location>
        <position position="123"/>
    </location>
    <ligand>
        <name>phosphoenolpyruvate</name>
        <dbReference type="ChEBI" id="CHEBI:58702"/>
    </ligand>
</feature>
<feature type="binding site" evidence="1">
    <location>
        <position position="167"/>
    </location>
    <ligand>
        <name>3-phosphoshikimate</name>
        <dbReference type="ChEBI" id="CHEBI:145989"/>
    </ligand>
</feature>
<feature type="binding site" evidence="1">
    <location>
        <position position="169"/>
    </location>
    <ligand>
        <name>3-phosphoshikimate</name>
        <dbReference type="ChEBI" id="CHEBI:145989"/>
    </ligand>
</feature>
<feature type="binding site" evidence="1">
    <location>
        <position position="169"/>
    </location>
    <ligand>
        <name>phosphoenolpyruvate</name>
        <dbReference type="ChEBI" id="CHEBI:58702"/>
    </ligand>
</feature>
<feature type="binding site" evidence="1">
    <location>
        <position position="317"/>
    </location>
    <ligand>
        <name>3-phosphoshikimate</name>
        <dbReference type="ChEBI" id="CHEBI:145989"/>
    </ligand>
</feature>
<feature type="binding site" evidence="1">
    <location>
        <position position="344"/>
    </location>
    <ligand>
        <name>3-phosphoshikimate</name>
        <dbReference type="ChEBI" id="CHEBI:145989"/>
    </ligand>
</feature>
<feature type="binding site" evidence="1">
    <location>
        <position position="348"/>
    </location>
    <ligand>
        <name>phosphoenolpyruvate</name>
        <dbReference type="ChEBI" id="CHEBI:58702"/>
    </ligand>
</feature>
<feature type="binding site" evidence="1">
    <location>
        <position position="390"/>
    </location>
    <ligand>
        <name>phosphoenolpyruvate</name>
        <dbReference type="ChEBI" id="CHEBI:58702"/>
    </ligand>
</feature>
<accession>Q4L6G8</accession>